<dbReference type="EC" id="2.1.1.177"/>
<dbReference type="EMBL" id="CP000264">
    <property type="protein sequence ID" value="ABD53295.1"/>
    <property type="molecule type" value="Genomic_DNA"/>
</dbReference>
<dbReference type="SMR" id="Q28VG7"/>
<dbReference type="STRING" id="290400.Jann_0378"/>
<dbReference type="KEGG" id="jan:Jann_0378"/>
<dbReference type="eggNOG" id="COG1576">
    <property type="taxonomic scope" value="Bacteria"/>
</dbReference>
<dbReference type="HOGENOM" id="CLU_100552_1_1_5"/>
<dbReference type="Proteomes" id="UP000008326">
    <property type="component" value="Chromosome"/>
</dbReference>
<dbReference type="GO" id="GO:0005737">
    <property type="term" value="C:cytoplasm"/>
    <property type="evidence" value="ECO:0007669"/>
    <property type="project" value="UniProtKB-SubCell"/>
</dbReference>
<dbReference type="GO" id="GO:0008168">
    <property type="term" value="F:methyltransferase activity"/>
    <property type="evidence" value="ECO:0007669"/>
    <property type="project" value="UniProtKB-KW"/>
</dbReference>
<dbReference type="GO" id="GO:0032259">
    <property type="term" value="P:methylation"/>
    <property type="evidence" value="ECO:0007669"/>
    <property type="project" value="UniProtKB-KW"/>
</dbReference>
<dbReference type="GO" id="GO:0006364">
    <property type="term" value="P:rRNA processing"/>
    <property type="evidence" value="ECO:0007669"/>
    <property type="project" value="UniProtKB-KW"/>
</dbReference>
<dbReference type="CDD" id="cd18081">
    <property type="entry name" value="RlmH-like"/>
    <property type="match status" value="1"/>
</dbReference>
<dbReference type="Gene3D" id="3.40.1280.10">
    <property type="match status" value="1"/>
</dbReference>
<dbReference type="InterPro" id="IPR029028">
    <property type="entry name" value="Alpha/beta_knot_MTases"/>
</dbReference>
<dbReference type="InterPro" id="IPR003742">
    <property type="entry name" value="RlmH-like"/>
</dbReference>
<dbReference type="InterPro" id="IPR029026">
    <property type="entry name" value="tRNA_m1G_MTases_N"/>
</dbReference>
<dbReference type="NCBIfam" id="NF000988">
    <property type="entry name" value="PRK00103.2-2"/>
    <property type="match status" value="1"/>
</dbReference>
<dbReference type="PANTHER" id="PTHR33603">
    <property type="entry name" value="METHYLTRANSFERASE"/>
    <property type="match status" value="1"/>
</dbReference>
<dbReference type="PANTHER" id="PTHR33603:SF1">
    <property type="entry name" value="RIBOSOMAL RNA LARGE SUBUNIT METHYLTRANSFERASE H"/>
    <property type="match status" value="1"/>
</dbReference>
<dbReference type="Pfam" id="PF02590">
    <property type="entry name" value="SPOUT_MTase"/>
    <property type="match status" value="1"/>
</dbReference>
<dbReference type="PIRSF" id="PIRSF004505">
    <property type="entry name" value="MT_bac"/>
    <property type="match status" value="1"/>
</dbReference>
<dbReference type="SUPFAM" id="SSF75217">
    <property type="entry name" value="alpha/beta knot"/>
    <property type="match status" value="1"/>
</dbReference>
<accession>Q28VG7</accession>
<feature type="chain" id="PRO_0000366611" description="Ribosomal RNA large subunit methyltransferase H">
    <location>
        <begin position="1"/>
        <end position="137"/>
    </location>
</feature>
<feature type="binding site" evidence="1">
    <location>
        <position position="85"/>
    </location>
    <ligand>
        <name>S-adenosyl-L-methionine</name>
        <dbReference type="ChEBI" id="CHEBI:59789"/>
    </ligand>
</feature>
<feature type="binding site" evidence="1">
    <location>
        <begin position="104"/>
        <end position="109"/>
    </location>
    <ligand>
        <name>S-adenosyl-L-methionine</name>
        <dbReference type="ChEBI" id="CHEBI:59789"/>
    </ligand>
</feature>
<protein>
    <recommendedName>
        <fullName>Ribosomal RNA large subunit methyltransferase H</fullName>
        <ecNumber>2.1.1.177</ecNumber>
    </recommendedName>
    <alternativeName>
        <fullName>23S rRNA (pseudouridine1915-N3)-methyltransferase</fullName>
    </alternativeName>
    <alternativeName>
        <fullName>23S rRNA m3Psi1915 methyltransferase</fullName>
    </alternativeName>
    <alternativeName>
        <fullName>rRNA (pseudouridine-N3-)-methyltransferase RlmH</fullName>
    </alternativeName>
</protein>
<comment type="function">
    <text evidence="1">Specifically methylates the pseudouridine at position 1915 (m3Psi1915) in 23S rRNA.</text>
</comment>
<comment type="catalytic activity">
    <reaction>
        <text>pseudouridine(1915) in 23S rRNA + S-adenosyl-L-methionine = N(3)-methylpseudouridine(1915) in 23S rRNA + S-adenosyl-L-homocysteine + H(+)</text>
        <dbReference type="Rhea" id="RHEA:42752"/>
        <dbReference type="Rhea" id="RHEA-COMP:10221"/>
        <dbReference type="Rhea" id="RHEA-COMP:10222"/>
        <dbReference type="ChEBI" id="CHEBI:15378"/>
        <dbReference type="ChEBI" id="CHEBI:57856"/>
        <dbReference type="ChEBI" id="CHEBI:59789"/>
        <dbReference type="ChEBI" id="CHEBI:65314"/>
        <dbReference type="ChEBI" id="CHEBI:74486"/>
        <dbReference type="EC" id="2.1.1.177"/>
    </reaction>
</comment>
<comment type="subunit">
    <text evidence="1">Homodimer.</text>
</comment>
<comment type="subcellular location">
    <subcellularLocation>
        <location evidence="2">Cytoplasm</location>
    </subcellularLocation>
</comment>
<comment type="similarity">
    <text evidence="2">Belongs to the RNA methyltransferase RlmH family.</text>
</comment>
<name>RLMH_JANSC</name>
<proteinExistence type="inferred from homology"/>
<keyword id="KW-0963">Cytoplasm</keyword>
<keyword id="KW-0489">Methyltransferase</keyword>
<keyword id="KW-1185">Reference proteome</keyword>
<keyword id="KW-0698">rRNA processing</keyword>
<keyword id="KW-0949">S-adenosyl-L-methionine</keyword>
<keyword id="KW-0808">Transferase</keyword>
<reference key="1">
    <citation type="submission" date="2006-02" db="EMBL/GenBank/DDBJ databases">
        <title>Complete sequence of chromosome of Jannaschia sp. CCS1.</title>
        <authorList>
            <consortium name="US DOE Joint Genome Institute"/>
            <person name="Copeland A."/>
            <person name="Lucas S."/>
            <person name="Lapidus A."/>
            <person name="Barry K."/>
            <person name="Detter J.C."/>
            <person name="Glavina del Rio T."/>
            <person name="Hammon N."/>
            <person name="Israni S."/>
            <person name="Pitluck S."/>
            <person name="Brettin T."/>
            <person name="Bruce D."/>
            <person name="Han C."/>
            <person name="Tapia R."/>
            <person name="Gilna P."/>
            <person name="Chertkov O."/>
            <person name="Saunders E."/>
            <person name="Schmutz J."/>
            <person name="Larimer F."/>
            <person name="Land M."/>
            <person name="Kyrpides N."/>
            <person name="Lykidis A."/>
            <person name="Moran M.A."/>
            <person name="Belas R."/>
            <person name="Ye W."/>
            <person name="Buchan A."/>
            <person name="Gonzalez J.M."/>
            <person name="Schell M.A."/>
            <person name="Richardson P."/>
        </authorList>
    </citation>
    <scope>NUCLEOTIDE SEQUENCE [LARGE SCALE GENOMIC DNA]</scope>
    <source>
        <strain>CCS1</strain>
    </source>
</reference>
<evidence type="ECO:0000250" key="1"/>
<evidence type="ECO:0000305" key="2"/>
<organism>
    <name type="scientific">Jannaschia sp. (strain CCS1)</name>
    <dbReference type="NCBI Taxonomy" id="290400"/>
    <lineage>
        <taxon>Bacteria</taxon>
        <taxon>Pseudomonadati</taxon>
        <taxon>Pseudomonadota</taxon>
        <taxon>Alphaproteobacteria</taxon>
        <taxon>Rhodobacterales</taxon>
        <taxon>Roseobacteraceae</taxon>
        <taxon>Jannaschia</taxon>
    </lineage>
</organism>
<gene>
    <name type="primary">rlmH</name>
    <name type="ordered locus">Jann_0378</name>
</gene>
<sequence length="137" mass="14809">MIDDYLRRFDKTGRGLGLSLGQVVEVENRKGGGMAAEADLIRARLPGGVFWVMDERGDVMTSPGFADRLGAQRDRGAGDLTMVIGGADGIDPTLRDEAGMAISFGKMVWPHMLARVMLSEQLYRAASILAGGPYHRV</sequence>